<keyword id="KW-1185">Reference proteome</keyword>
<protein>
    <recommendedName>
        <fullName>FLYWCH family member 2</fullName>
    </recommendedName>
</protein>
<name>FWCH2_MOUSE</name>
<dbReference type="EMBL" id="AK013108">
    <property type="protein sequence ID" value="BAB28653.1"/>
    <property type="molecule type" value="mRNA"/>
</dbReference>
<dbReference type="EMBL" id="AK019378">
    <property type="protein sequence ID" value="BAB31688.1"/>
    <property type="molecule type" value="mRNA"/>
</dbReference>
<dbReference type="EMBL" id="BC024947">
    <property type="protein sequence ID" value="AAH24947.1"/>
    <property type="molecule type" value="mRNA"/>
</dbReference>
<dbReference type="CCDS" id="CCDS28464.1"/>
<dbReference type="RefSeq" id="NP_001344069.1">
    <property type="nucleotide sequence ID" value="NM_001357140.1"/>
</dbReference>
<dbReference type="RefSeq" id="NP_084074.1">
    <property type="nucleotide sequence ID" value="NM_029798.4"/>
</dbReference>
<dbReference type="RefSeq" id="XP_017173210.1">
    <property type="nucleotide sequence ID" value="XM_017317721.1"/>
</dbReference>
<dbReference type="BioGRID" id="218393">
    <property type="interactions" value="4"/>
</dbReference>
<dbReference type="FunCoup" id="Q9CQE9">
    <property type="interactions" value="10"/>
</dbReference>
<dbReference type="STRING" id="10090.ENSMUSP00000024704"/>
<dbReference type="iPTMnet" id="Q9CQE9"/>
<dbReference type="PhosphoSitePlus" id="Q9CQE9"/>
<dbReference type="PaxDb" id="10090-ENSMUSP00000024704"/>
<dbReference type="ProteomicsDB" id="267531"/>
<dbReference type="Antibodypedia" id="52358">
    <property type="antibodies" value="76 antibodies from 13 providers"/>
</dbReference>
<dbReference type="Ensembl" id="ENSMUST00000024704.10">
    <property type="protein sequence ID" value="ENSMUSP00000024704.4"/>
    <property type="gene ID" value="ENSMUSG00000023911.13"/>
</dbReference>
<dbReference type="GeneID" id="76917"/>
<dbReference type="KEGG" id="mmu:76917"/>
<dbReference type="UCSC" id="uc008atl.1">
    <property type="organism name" value="mouse"/>
</dbReference>
<dbReference type="AGR" id="MGI:1924167"/>
<dbReference type="CTD" id="114984"/>
<dbReference type="MGI" id="MGI:1924167">
    <property type="gene designation" value="Flywch2"/>
</dbReference>
<dbReference type="VEuPathDB" id="HostDB:ENSMUSG00000023911"/>
<dbReference type="eggNOG" id="ENOG502T3Y9">
    <property type="taxonomic scope" value="Eukaryota"/>
</dbReference>
<dbReference type="GeneTree" id="ENSGT00530000064166"/>
<dbReference type="HOGENOM" id="CLU_149723_0_0_1"/>
<dbReference type="InParanoid" id="Q9CQE9"/>
<dbReference type="OMA" id="PTVCPSM"/>
<dbReference type="TreeFam" id="TF338211"/>
<dbReference type="BioGRID-ORCS" id="76917">
    <property type="hits" value="1 hit in 75 CRISPR screens"/>
</dbReference>
<dbReference type="ChiTaRS" id="Flywch2">
    <property type="organism name" value="mouse"/>
</dbReference>
<dbReference type="PRO" id="PR:Q9CQE9"/>
<dbReference type="Proteomes" id="UP000000589">
    <property type="component" value="Chromosome 17"/>
</dbReference>
<dbReference type="RNAct" id="Q9CQE9">
    <property type="molecule type" value="protein"/>
</dbReference>
<dbReference type="Bgee" id="ENSMUSG00000023911">
    <property type="expression patterns" value="Expressed in internal carotid artery and 184 other cell types or tissues"/>
</dbReference>
<dbReference type="ExpressionAtlas" id="Q9CQE9">
    <property type="expression patterns" value="baseline and differential"/>
</dbReference>
<dbReference type="InterPro" id="IPR029279">
    <property type="entry name" value="FLYWCH_N"/>
</dbReference>
<dbReference type="InterPro" id="IPR040312">
    <property type="entry name" value="FWCH1/FWCH2"/>
</dbReference>
<dbReference type="PANTHER" id="PTHR31665:SF0">
    <property type="entry name" value="FLYWCH FAMILY MEMBER 2"/>
    <property type="match status" value="1"/>
</dbReference>
<dbReference type="PANTHER" id="PTHR31665">
    <property type="entry name" value="FLYWCH FAMILY MEMBER 2-RELATED"/>
    <property type="match status" value="1"/>
</dbReference>
<dbReference type="Pfam" id="PF15423">
    <property type="entry name" value="FLYWCH_N"/>
    <property type="match status" value="1"/>
</dbReference>
<organism>
    <name type="scientific">Mus musculus</name>
    <name type="common">Mouse</name>
    <dbReference type="NCBI Taxonomy" id="10090"/>
    <lineage>
        <taxon>Eukaryota</taxon>
        <taxon>Metazoa</taxon>
        <taxon>Chordata</taxon>
        <taxon>Craniata</taxon>
        <taxon>Vertebrata</taxon>
        <taxon>Euteleostomi</taxon>
        <taxon>Mammalia</taxon>
        <taxon>Eutheria</taxon>
        <taxon>Euarchontoglires</taxon>
        <taxon>Glires</taxon>
        <taxon>Rodentia</taxon>
        <taxon>Myomorpha</taxon>
        <taxon>Muroidea</taxon>
        <taxon>Muridae</taxon>
        <taxon>Murinae</taxon>
        <taxon>Mus</taxon>
        <taxon>Mus</taxon>
    </lineage>
</organism>
<proteinExistence type="evidence at protein level"/>
<feature type="chain" id="PRO_0000316525" description="FLYWCH family member 2">
    <location>
        <begin position="1"/>
        <end position="139"/>
    </location>
</feature>
<feature type="region of interest" description="Disordered" evidence="1">
    <location>
        <begin position="1"/>
        <end position="36"/>
    </location>
</feature>
<feature type="region of interest" description="Disordered" evidence="1">
    <location>
        <begin position="86"/>
        <end position="139"/>
    </location>
</feature>
<feature type="compositionally biased region" description="Basic and acidic residues" evidence="1">
    <location>
        <begin position="98"/>
        <end position="107"/>
    </location>
</feature>
<feature type="compositionally biased region" description="Low complexity" evidence="1">
    <location>
        <begin position="120"/>
        <end position="130"/>
    </location>
</feature>
<feature type="sequence conflict" description="In Ref. 2; AAH24947." evidence="2" ref="2">
    <original>P</original>
    <variation>A</variation>
    <location>
        <position position="6"/>
    </location>
</feature>
<evidence type="ECO:0000256" key="1">
    <source>
        <dbReference type="SAM" id="MobiDB-lite"/>
    </source>
</evidence>
<evidence type="ECO:0000305" key="2"/>
<sequence>MPQPKPSEQEGESMKASQEPAPQPGTDVVPAAPRKPRKFSKLVLLTASKDSAKVAGAKRKGVHCIMSLGVPGPATLAKALLKTHPEAQRAIEATPLEPEQKRSKQNLDSDGPEDNGGSGVSSSSSEETTVLPEAPSTSP</sequence>
<gene>
    <name type="primary">Flywch2</name>
</gene>
<accession>Q9CQE9</accession>
<accession>Q8R3N7</accession>
<reference key="1">
    <citation type="journal article" date="2005" name="Science">
        <title>The transcriptional landscape of the mammalian genome.</title>
        <authorList>
            <person name="Carninci P."/>
            <person name="Kasukawa T."/>
            <person name="Katayama S."/>
            <person name="Gough J."/>
            <person name="Frith M.C."/>
            <person name="Maeda N."/>
            <person name="Oyama R."/>
            <person name="Ravasi T."/>
            <person name="Lenhard B."/>
            <person name="Wells C."/>
            <person name="Kodzius R."/>
            <person name="Shimokawa K."/>
            <person name="Bajic V.B."/>
            <person name="Brenner S.E."/>
            <person name="Batalov S."/>
            <person name="Forrest A.R."/>
            <person name="Zavolan M."/>
            <person name="Davis M.J."/>
            <person name="Wilming L.G."/>
            <person name="Aidinis V."/>
            <person name="Allen J.E."/>
            <person name="Ambesi-Impiombato A."/>
            <person name="Apweiler R."/>
            <person name="Aturaliya R.N."/>
            <person name="Bailey T.L."/>
            <person name="Bansal M."/>
            <person name="Baxter L."/>
            <person name="Beisel K.W."/>
            <person name="Bersano T."/>
            <person name="Bono H."/>
            <person name="Chalk A.M."/>
            <person name="Chiu K.P."/>
            <person name="Choudhary V."/>
            <person name="Christoffels A."/>
            <person name="Clutterbuck D.R."/>
            <person name="Crowe M.L."/>
            <person name="Dalla E."/>
            <person name="Dalrymple B.P."/>
            <person name="de Bono B."/>
            <person name="Della Gatta G."/>
            <person name="di Bernardo D."/>
            <person name="Down T."/>
            <person name="Engstrom P."/>
            <person name="Fagiolini M."/>
            <person name="Faulkner G."/>
            <person name="Fletcher C.F."/>
            <person name="Fukushima T."/>
            <person name="Furuno M."/>
            <person name="Futaki S."/>
            <person name="Gariboldi M."/>
            <person name="Georgii-Hemming P."/>
            <person name="Gingeras T.R."/>
            <person name="Gojobori T."/>
            <person name="Green R.E."/>
            <person name="Gustincich S."/>
            <person name="Harbers M."/>
            <person name="Hayashi Y."/>
            <person name="Hensch T.K."/>
            <person name="Hirokawa N."/>
            <person name="Hill D."/>
            <person name="Huminiecki L."/>
            <person name="Iacono M."/>
            <person name="Ikeo K."/>
            <person name="Iwama A."/>
            <person name="Ishikawa T."/>
            <person name="Jakt M."/>
            <person name="Kanapin A."/>
            <person name="Katoh M."/>
            <person name="Kawasawa Y."/>
            <person name="Kelso J."/>
            <person name="Kitamura H."/>
            <person name="Kitano H."/>
            <person name="Kollias G."/>
            <person name="Krishnan S.P."/>
            <person name="Kruger A."/>
            <person name="Kummerfeld S.K."/>
            <person name="Kurochkin I.V."/>
            <person name="Lareau L.F."/>
            <person name="Lazarevic D."/>
            <person name="Lipovich L."/>
            <person name="Liu J."/>
            <person name="Liuni S."/>
            <person name="McWilliam S."/>
            <person name="Madan Babu M."/>
            <person name="Madera M."/>
            <person name="Marchionni L."/>
            <person name="Matsuda H."/>
            <person name="Matsuzawa S."/>
            <person name="Miki H."/>
            <person name="Mignone F."/>
            <person name="Miyake S."/>
            <person name="Morris K."/>
            <person name="Mottagui-Tabar S."/>
            <person name="Mulder N."/>
            <person name="Nakano N."/>
            <person name="Nakauchi H."/>
            <person name="Ng P."/>
            <person name="Nilsson R."/>
            <person name="Nishiguchi S."/>
            <person name="Nishikawa S."/>
            <person name="Nori F."/>
            <person name="Ohara O."/>
            <person name="Okazaki Y."/>
            <person name="Orlando V."/>
            <person name="Pang K.C."/>
            <person name="Pavan W.J."/>
            <person name="Pavesi G."/>
            <person name="Pesole G."/>
            <person name="Petrovsky N."/>
            <person name="Piazza S."/>
            <person name="Reed J."/>
            <person name="Reid J.F."/>
            <person name="Ring B.Z."/>
            <person name="Ringwald M."/>
            <person name="Rost B."/>
            <person name="Ruan Y."/>
            <person name="Salzberg S.L."/>
            <person name="Sandelin A."/>
            <person name="Schneider C."/>
            <person name="Schoenbach C."/>
            <person name="Sekiguchi K."/>
            <person name="Semple C.A."/>
            <person name="Seno S."/>
            <person name="Sessa L."/>
            <person name="Sheng Y."/>
            <person name="Shibata Y."/>
            <person name="Shimada H."/>
            <person name="Shimada K."/>
            <person name="Silva D."/>
            <person name="Sinclair B."/>
            <person name="Sperling S."/>
            <person name="Stupka E."/>
            <person name="Sugiura K."/>
            <person name="Sultana R."/>
            <person name="Takenaka Y."/>
            <person name="Taki K."/>
            <person name="Tammoja K."/>
            <person name="Tan S.L."/>
            <person name="Tang S."/>
            <person name="Taylor M.S."/>
            <person name="Tegner J."/>
            <person name="Teichmann S.A."/>
            <person name="Ueda H.R."/>
            <person name="van Nimwegen E."/>
            <person name="Verardo R."/>
            <person name="Wei C.L."/>
            <person name="Yagi K."/>
            <person name="Yamanishi H."/>
            <person name="Zabarovsky E."/>
            <person name="Zhu S."/>
            <person name="Zimmer A."/>
            <person name="Hide W."/>
            <person name="Bult C."/>
            <person name="Grimmond S.M."/>
            <person name="Teasdale R.D."/>
            <person name="Liu E.T."/>
            <person name="Brusic V."/>
            <person name="Quackenbush J."/>
            <person name="Wahlestedt C."/>
            <person name="Mattick J.S."/>
            <person name="Hume D.A."/>
            <person name="Kai C."/>
            <person name="Sasaki D."/>
            <person name="Tomaru Y."/>
            <person name="Fukuda S."/>
            <person name="Kanamori-Katayama M."/>
            <person name="Suzuki M."/>
            <person name="Aoki J."/>
            <person name="Arakawa T."/>
            <person name="Iida J."/>
            <person name="Imamura K."/>
            <person name="Itoh M."/>
            <person name="Kato T."/>
            <person name="Kawaji H."/>
            <person name="Kawagashira N."/>
            <person name="Kawashima T."/>
            <person name="Kojima M."/>
            <person name="Kondo S."/>
            <person name="Konno H."/>
            <person name="Nakano K."/>
            <person name="Ninomiya N."/>
            <person name="Nishio T."/>
            <person name="Okada M."/>
            <person name="Plessy C."/>
            <person name="Shibata K."/>
            <person name="Shiraki T."/>
            <person name="Suzuki S."/>
            <person name="Tagami M."/>
            <person name="Waki K."/>
            <person name="Watahiki A."/>
            <person name="Okamura-Oho Y."/>
            <person name="Suzuki H."/>
            <person name="Kawai J."/>
            <person name="Hayashizaki Y."/>
        </authorList>
    </citation>
    <scope>NUCLEOTIDE SEQUENCE [LARGE SCALE MRNA]</scope>
    <source>
        <strain>C57BL/6J</strain>
        <tissue>Head</tissue>
    </source>
</reference>
<reference key="2">
    <citation type="journal article" date="2004" name="Genome Res.">
        <title>The status, quality, and expansion of the NIH full-length cDNA project: the Mammalian Gene Collection (MGC).</title>
        <authorList>
            <consortium name="The MGC Project Team"/>
        </authorList>
    </citation>
    <scope>NUCLEOTIDE SEQUENCE [LARGE SCALE MRNA]</scope>
    <source>
        <strain>FVB/N</strain>
        <tissue>Mammary tumor</tissue>
    </source>
</reference>
<reference key="3">
    <citation type="journal article" date="2010" name="Cell">
        <title>A tissue-specific atlas of mouse protein phosphorylation and expression.</title>
        <authorList>
            <person name="Huttlin E.L."/>
            <person name="Jedrychowski M.P."/>
            <person name="Elias J.E."/>
            <person name="Goswami T."/>
            <person name="Rad R."/>
            <person name="Beausoleil S.A."/>
            <person name="Villen J."/>
            <person name="Haas W."/>
            <person name="Sowa M.E."/>
            <person name="Gygi S.P."/>
        </authorList>
    </citation>
    <scope>IDENTIFICATION BY MASS SPECTROMETRY [LARGE SCALE ANALYSIS]</scope>
    <source>
        <tissue>Brain</tissue>
        <tissue>Testis</tissue>
    </source>
</reference>